<sequence>MPGIVLIGAQWGDEGKGKATDLIGTKVDYVARFNGGNNAGHSVVVGDESYALHLLPSGIINPNLTPVIGNGVVVDPEVLFEEIDGLESRGIDCSHLKVSEAAHIIAPYHRTLDKVTERFLGKHKIGTTGRGIGPAYADKINRVGIRVHDLFNADHLHDKVEASLHQKNQMLVKLYNRRPIDVDQTTEELLKLGERLKPYVANTGLILNKALDEGKTVLFEGAQATMLDVDHGTYPFVTSSNPTAGGACTGTGVGPTRITRVVGVSKAYVTRVGEGPFPTELLDESGEWLRQQGHEFGVTTGRPRRCGWFDAVVNRYASQVNGLTDIVLTKLDVLAGLKEIPICVAYDVDGERHDDMPTDQAAFAAAKPIYETMPGWDEDISNCHSFDELPATCQAYVKRLEELSGCRISAIGTGPQRDHVIQINSLVD</sequence>
<comment type="function">
    <text evidence="1">Plays an important role in the de novo pathway of purine nucleotide biosynthesis. Catalyzes the first committed step in the biosynthesis of AMP from IMP.</text>
</comment>
<comment type="catalytic activity">
    <reaction evidence="1">
        <text>IMP + L-aspartate + GTP = N(6)-(1,2-dicarboxyethyl)-AMP + GDP + phosphate + 2 H(+)</text>
        <dbReference type="Rhea" id="RHEA:15753"/>
        <dbReference type="ChEBI" id="CHEBI:15378"/>
        <dbReference type="ChEBI" id="CHEBI:29991"/>
        <dbReference type="ChEBI" id="CHEBI:37565"/>
        <dbReference type="ChEBI" id="CHEBI:43474"/>
        <dbReference type="ChEBI" id="CHEBI:57567"/>
        <dbReference type="ChEBI" id="CHEBI:58053"/>
        <dbReference type="ChEBI" id="CHEBI:58189"/>
        <dbReference type="EC" id="6.3.4.4"/>
    </reaction>
</comment>
<comment type="cofactor">
    <cofactor evidence="1">
        <name>Mg(2+)</name>
        <dbReference type="ChEBI" id="CHEBI:18420"/>
    </cofactor>
    <text evidence="1">Binds 1 Mg(2+) ion per subunit.</text>
</comment>
<comment type="pathway">
    <text evidence="1">Purine metabolism; AMP biosynthesis via de novo pathway; AMP from IMP: step 1/2.</text>
</comment>
<comment type="subunit">
    <text evidence="1">Homodimer.</text>
</comment>
<comment type="subcellular location">
    <subcellularLocation>
        <location evidence="1">Cytoplasm</location>
    </subcellularLocation>
</comment>
<comment type="similarity">
    <text evidence="1">Belongs to the adenylosuccinate synthetase family.</text>
</comment>
<dbReference type="EC" id="6.3.4.4" evidence="1"/>
<dbReference type="EMBL" id="AE014295">
    <property type="protein sequence ID" value="AAN24373.1"/>
    <property type="molecule type" value="Genomic_DNA"/>
</dbReference>
<dbReference type="RefSeq" id="NP_695737.1">
    <property type="nucleotide sequence ID" value="NC_004307.2"/>
</dbReference>
<dbReference type="RefSeq" id="WP_008783481.1">
    <property type="nucleotide sequence ID" value="NC_004307.2"/>
</dbReference>
<dbReference type="SMR" id="Q8G6T9"/>
<dbReference type="STRING" id="206672.BL0549"/>
<dbReference type="EnsemblBacteria" id="AAN24373">
    <property type="protein sequence ID" value="AAN24373"/>
    <property type="gene ID" value="BL0549"/>
</dbReference>
<dbReference type="KEGG" id="blo:BL0549"/>
<dbReference type="PATRIC" id="fig|206672.9.peg.1293"/>
<dbReference type="HOGENOM" id="CLU_029848_0_0_11"/>
<dbReference type="OrthoDB" id="9807553at2"/>
<dbReference type="PhylomeDB" id="Q8G6T9"/>
<dbReference type="UniPathway" id="UPA00075">
    <property type="reaction ID" value="UER00335"/>
</dbReference>
<dbReference type="Proteomes" id="UP000000439">
    <property type="component" value="Chromosome"/>
</dbReference>
<dbReference type="GO" id="GO:0005737">
    <property type="term" value="C:cytoplasm"/>
    <property type="evidence" value="ECO:0007669"/>
    <property type="project" value="UniProtKB-SubCell"/>
</dbReference>
<dbReference type="GO" id="GO:0004019">
    <property type="term" value="F:adenylosuccinate synthase activity"/>
    <property type="evidence" value="ECO:0007669"/>
    <property type="project" value="UniProtKB-UniRule"/>
</dbReference>
<dbReference type="GO" id="GO:0005525">
    <property type="term" value="F:GTP binding"/>
    <property type="evidence" value="ECO:0007669"/>
    <property type="project" value="UniProtKB-UniRule"/>
</dbReference>
<dbReference type="GO" id="GO:0000287">
    <property type="term" value="F:magnesium ion binding"/>
    <property type="evidence" value="ECO:0007669"/>
    <property type="project" value="UniProtKB-UniRule"/>
</dbReference>
<dbReference type="GO" id="GO:0044208">
    <property type="term" value="P:'de novo' AMP biosynthetic process"/>
    <property type="evidence" value="ECO:0007669"/>
    <property type="project" value="UniProtKB-UniRule"/>
</dbReference>
<dbReference type="GO" id="GO:0046040">
    <property type="term" value="P:IMP metabolic process"/>
    <property type="evidence" value="ECO:0007669"/>
    <property type="project" value="TreeGrafter"/>
</dbReference>
<dbReference type="CDD" id="cd03108">
    <property type="entry name" value="AdSS"/>
    <property type="match status" value="1"/>
</dbReference>
<dbReference type="FunFam" id="1.10.300.10:FF:000001">
    <property type="entry name" value="Adenylosuccinate synthetase"/>
    <property type="match status" value="1"/>
</dbReference>
<dbReference type="FunFam" id="3.90.170.10:FF:000001">
    <property type="entry name" value="Adenylosuccinate synthetase"/>
    <property type="match status" value="1"/>
</dbReference>
<dbReference type="Gene3D" id="3.40.440.10">
    <property type="entry name" value="Adenylosuccinate Synthetase, subunit A, domain 1"/>
    <property type="match status" value="1"/>
</dbReference>
<dbReference type="Gene3D" id="1.10.300.10">
    <property type="entry name" value="Adenylosuccinate Synthetase, subunit A, domain 2"/>
    <property type="match status" value="1"/>
</dbReference>
<dbReference type="Gene3D" id="3.90.170.10">
    <property type="entry name" value="Adenylosuccinate Synthetase, subunit A, domain 3"/>
    <property type="match status" value="1"/>
</dbReference>
<dbReference type="HAMAP" id="MF_00011">
    <property type="entry name" value="Adenylosucc_synth"/>
    <property type="match status" value="1"/>
</dbReference>
<dbReference type="InterPro" id="IPR018220">
    <property type="entry name" value="Adenylosuccin_syn_GTP-bd"/>
</dbReference>
<dbReference type="InterPro" id="IPR033128">
    <property type="entry name" value="Adenylosuccin_syn_Lys_AS"/>
</dbReference>
<dbReference type="InterPro" id="IPR042109">
    <property type="entry name" value="Adenylosuccinate_synth_dom1"/>
</dbReference>
<dbReference type="InterPro" id="IPR042110">
    <property type="entry name" value="Adenylosuccinate_synth_dom2"/>
</dbReference>
<dbReference type="InterPro" id="IPR042111">
    <property type="entry name" value="Adenylosuccinate_synth_dom3"/>
</dbReference>
<dbReference type="InterPro" id="IPR001114">
    <property type="entry name" value="Adenylosuccinate_synthetase"/>
</dbReference>
<dbReference type="InterPro" id="IPR027417">
    <property type="entry name" value="P-loop_NTPase"/>
</dbReference>
<dbReference type="NCBIfam" id="NF002223">
    <property type="entry name" value="PRK01117.1"/>
    <property type="match status" value="1"/>
</dbReference>
<dbReference type="NCBIfam" id="TIGR00184">
    <property type="entry name" value="purA"/>
    <property type="match status" value="1"/>
</dbReference>
<dbReference type="PANTHER" id="PTHR11846">
    <property type="entry name" value="ADENYLOSUCCINATE SYNTHETASE"/>
    <property type="match status" value="1"/>
</dbReference>
<dbReference type="PANTHER" id="PTHR11846:SF0">
    <property type="entry name" value="ADENYLOSUCCINATE SYNTHETASE"/>
    <property type="match status" value="1"/>
</dbReference>
<dbReference type="Pfam" id="PF00709">
    <property type="entry name" value="Adenylsucc_synt"/>
    <property type="match status" value="1"/>
</dbReference>
<dbReference type="SMART" id="SM00788">
    <property type="entry name" value="Adenylsucc_synt"/>
    <property type="match status" value="1"/>
</dbReference>
<dbReference type="SUPFAM" id="SSF52540">
    <property type="entry name" value="P-loop containing nucleoside triphosphate hydrolases"/>
    <property type="match status" value="1"/>
</dbReference>
<dbReference type="PROSITE" id="PS01266">
    <property type="entry name" value="ADENYLOSUCCIN_SYN_1"/>
    <property type="match status" value="1"/>
</dbReference>
<dbReference type="PROSITE" id="PS00513">
    <property type="entry name" value="ADENYLOSUCCIN_SYN_2"/>
    <property type="match status" value="1"/>
</dbReference>
<reference key="1">
    <citation type="journal article" date="2002" name="Proc. Natl. Acad. Sci. U.S.A.">
        <title>The genome sequence of Bifidobacterium longum reflects its adaptation to the human gastrointestinal tract.</title>
        <authorList>
            <person name="Schell M.A."/>
            <person name="Karmirantzou M."/>
            <person name="Snel B."/>
            <person name="Vilanova D."/>
            <person name="Berger B."/>
            <person name="Pessi G."/>
            <person name="Zwahlen M.-C."/>
            <person name="Desiere F."/>
            <person name="Bork P."/>
            <person name="Delley M."/>
            <person name="Pridmore R.D."/>
            <person name="Arigoni F."/>
        </authorList>
    </citation>
    <scope>NUCLEOTIDE SEQUENCE [LARGE SCALE GENOMIC DNA]</scope>
    <source>
        <strain>NCC 2705</strain>
    </source>
</reference>
<gene>
    <name evidence="1" type="primary">purA</name>
    <name type="ordered locus">BL0549</name>
</gene>
<feature type="chain" id="PRO_0000095148" description="Adenylosuccinate synthetase">
    <location>
        <begin position="1"/>
        <end position="428"/>
    </location>
</feature>
<feature type="active site" description="Proton acceptor" evidence="1">
    <location>
        <position position="13"/>
    </location>
</feature>
<feature type="active site" description="Proton donor" evidence="1">
    <location>
        <position position="41"/>
    </location>
</feature>
<feature type="binding site" evidence="1">
    <location>
        <begin position="12"/>
        <end position="18"/>
    </location>
    <ligand>
        <name>GTP</name>
        <dbReference type="ChEBI" id="CHEBI:37565"/>
    </ligand>
</feature>
<feature type="binding site" description="in other chain" evidence="1">
    <location>
        <begin position="13"/>
        <end position="16"/>
    </location>
    <ligand>
        <name>IMP</name>
        <dbReference type="ChEBI" id="CHEBI:58053"/>
        <note>ligand shared between dimeric partners</note>
    </ligand>
</feature>
<feature type="binding site" evidence="1">
    <location>
        <position position="13"/>
    </location>
    <ligand>
        <name>Mg(2+)</name>
        <dbReference type="ChEBI" id="CHEBI:18420"/>
    </ligand>
</feature>
<feature type="binding site" description="in other chain" evidence="1">
    <location>
        <begin position="38"/>
        <end position="41"/>
    </location>
    <ligand>
        <name>IMP</name>
        <dbReference type="ChEBI" id="CHEBI:58053"/>
        <note>ligand shared between dimeric partners</note>
    </ligand>
</feature>
<feature type="binding site" evidence="1">
    <location>
        <begin position="40"/>
        <end position="42"/>
    </location>
    <ligand>
        <name>GTP</name>
        <dbReference type="ChEBI" id="CHEBI:37565"/>
    </ligand>
</feature>
<feature type="binding site" evidence="1">
    <location>
        <position position="40"/>
    </location>
    <ligand>
        <name>Mg(2+)</name>
        <dbReference type="ChEBI" id="CHEBI:18420"/>
    </ligand>
</feature>
<feature type="binding site" description="in other chain" evidence="1">
    <location>
        <position position="128"/>
    </location>
    <ligand>
        <name>IMP</name>
        <dbReference type="ChEBI" id="CHEBI:58053"/>
        <note>ligand shared between dimeric partners</note>
    </ligand>
</feature>
<feature type="binding site" evidence="1">
    <location>
        <position position="142"/>
    </location>
    <ligand>
        <name>IMP</name>
        <dbReference type="ChEBI" id="CHEBI:58053"/>
        <note>ligand shared between dimeric partners</note>
    </ligand>
</feature>
<feature type="binding site" description="in other chain" evidence="1">
    <location>
        <position position="223"/>
    </location>
    <ligand>
        <name>IMP</name>
        <dbReference type="ChEBI" id="CHEBI:58053"/>
        <note>ligand shared between dimeric partners</note>
    </ligand>
</feature>
<feature type="binding site" description="in other chain" evidence="1">
    <location>
        <position position="238"/>
    </location>
    <ligand>
        <name>IMP</name>
        <dbReference type="ChEBI" id="CHEBI:58053"/>
        <note>ligand shared between dimeric partners</note>
    </ligand>
</feature>
<feature type="binding site" evidence="1">
    <location>
        <begin position="298"/>
        <end position="304"/>
    </location>
    <ligand>
        <name>substrate</name>
    </ligand>
</feature>
<feature type="binding site" description="in other chain" evidence="1">
    <location>
        <position position="302"/>
    </location>
    <ligand>
        <name>IMP</name>
        <dbReference type="ChEBI" id="CHEBI:58053"/>
        <note>ligand shared between dimeric partners</note>
    </ligand>
</feature>
<feature type="binding site" evidence="1">
    <location>
        <position position="304"/>
    </location>
    <ligand>
        <name>GTP</name>
        <dbReference type="ChEBI" id="CHEBI:37565"/>
    </ligand>
</feature>
<feature type="binding site" evidence="1">
    <location>
        <begin position="330"/>
        <end position="332"/>
    </location>
    <ligand>
        <name>GTP</name>
        <dbReference type="ChEBI" id="CHEBI:37565"/>
    </ligand>
</feature>
<feature type="binding site" evidence="1">
    <location>
        <begin position="412"/>
        <end position="414"/>
    </location>
    <ligand>
        <name>GTP</name>
        <dbReference type="ChEBI" id="CHEBI:37565"/>
    </ligand>
</feature>
<keyword id="KW-0963">Cytoplasm</keyword>
<keyword id="KW-0342">GTP-binding</keyword>
<keyword id="KW-0436">Ligase</keyword>
<keyword id="KW-0460">Magnesium</keyword>
<keyword id="KW-0479">Metal-binding</keyword>
<keyword id="KW-0547">Nucleotide-binding</keyword>
<keyword id="KW-0658">Purine biosynthesis</keyword>
<keyword id="KW-1185">Reference proteome</keyword>
<proteinExistence type="inferred from homology"/>
<name>PURA_BIFLO</name>
<protein>
    <recommendedName>
        <fullName evidence="1">Adenylosuccinate synthetase</fullName>
        <shortName evidence="1">AMPSase</shortName>
        <shortName evidence="1">AdSS</shortName>
        <ecNumber evidence="1">6.3.4.4</ecNumber>
    </recommendedName>
    <alternativeName>
        <fullName evidence="1">IMP--aspartate ligase</fullName>
    </alternativeName>
</protein>
<organism>
    <name type="scientific">Bifidobacterium longum (strain NCC 2705)</name>
    <dbReference type="NCBI Taxonomy" id="206672"/>
    <lineage>
        <taxon>Bacteria</taxon>
        <taxon>Bacillati</taxon>
        <taxon>Actinomycetota</taxon>
        <taxon>Actinomycetes</taxon>
        <taxon>Bifidobacteriales</taxon>
        <taxon>Bifidobacteriaceae</taxon>
        <taxon>Bifidobacterium</taxon>
    </lineage>
</organism>
<accession>Q8G6T9</accession>
<evidence type="ECO:0000255" key="1">
    <source>
        <dbReference type="HAMAP-Rule" id="MF_00011"/>
    </source>
</evidence>